<reference key="1">
    <citation type="journal article" date="1991" name="J. Virol.">
        <title>Equine arteritis virus is not a togavirus but belongs to the coronaviruslike superfamily.</title>
        <authorList>
            <person name="den Boon J.A."/>
            <person name="Snijder E.J."/>
            <person name="Chirnside E.D."/>
            <person name="de Vries A.A.F."/>
            <person name="Horzinek M.C."/>
            <person name="Spaan W.J.M."/>
        </authorList>
    </citation>
    <scope>NUCLEOTIDE SEQUENCE [GENOMIC RNA]</scope>
</reference>
<reference key="2">
    <citation type="journal article" date="2003" name="J. Virol.">
        <title>Formation of disulfide-linked complexes between the three minor envelope glycoproteins (GP2b, GP3, and GP4) of equine arteritis virus.</title>
        <authorList>
            <person name="Wieringa R."/>
            <person name="de Vries A.A."/>
            <person name="Rottier P.J."/>
        </authorList>
    </citation>
    <scope>SUBUNIT</scope>
    <scope>SUBCELLULAR LOCATION</scope>
</reference>
<reference key="3">
    <citation type="journal article" date="2003" name="J. Virol.">
        <title>Intra- and intermolecular disulfide bonds of the GP2b glycoprotein of equine arteritis virus: relevance for virus assembly and infectivity.</title>
        <authorList>
            <person name="Wieringa R."/>
            <person name="De Vries A.A."/>
            <person name="Post S.M."/>
            <person name="Rottier P.J."/>
        </authorList>
    </citation>
    <scope>DISULFIDE BONDS</scope>
</reference>
<reference key="4">
    <citation type="journal article" date="2008" name="Virology">
        <title>Equine arteritis virus is delivered to an acidic compartment of host cells via clathrin-dependent endocytosis.</title>
        <authorList>
            <person name="Nitschke M."/>
            <person name="Korte T."/>
            <person name="Tielesch C."/>
            <person name="Ter-Avetisyan G."/>
            <person name="Tunnemann G."/>
            <person name="Cardoso M.C."/>
            <person name="Veit M."/>
            <person name="Herrmann A."/>
        </authorList>
    </citation>
    <scope>FUNCTION OF GP2B-GP3-GP4 HETEROTRIMER</scope>
</reference>
<gene>
    <name type="primary">GP2b</name>
    <name type="ORF">2b</name>
</gene>
<keyword id="KW-1165">Clathrin-mediated endocytosis of virus by host</keyword>
<keyword id="KW-1015">Disulfide bond</keyword>
<keyword id="KW-0325">Glycoprotein</keyword>
<keyword id="KW-1038">Host endoplasmic reticulum</keyword>
<keyword id="KW-1040">Host Golgi apparatus</keyword>
<keyword id="KW-1043">Host membrane</keyword>
<keyword id="KW-0945">Host-virus interaction</keyword>
<keyword id="KW-0472">Membrane</keyword>
<keyword id="KW-1185">Reference proteome</keyword>
<keyword id="KW-0964">Secreted</keyword>
<keyword id="KW-0732">Signal</keyword>
<keyword id="KW-0812">Transmembrane</keyword>
<keyword id="KW-1133">Transmembrane helix</keyword>
<keyword id="KW-1161">Viral attachment to host cell</keyword>
<keyword id="KW-0261">Viral envelope protein</keyword>
<keyword id="KW-1162">Viral penetration into host cytoplasm</keyword>
<keyword id="KW-0946">Virion</keyword>
<keyword id="KW-1164">Virus endocytosis by host</keyword>
<keyword id="KW-1160">Virus entry into host cell</keyword>
<organism>
    <name type="scientific">Equine arteritis virus (strain Bucyrus)</name>
    <name type="common">EAV</name>
    <dbReference type="NCBI Taxonomy" id="299386"/>
    <lineage>
        <taxon>Viruses</taxon>
        <taxon>Riboviria</taxon>
        <taxon>Orthornavirae</taxon>
        <taxon>Pisuviricota</taxon>
        <taxon>Pisoniviricetes</taxon>
        <taxon>Nidovirales</taxon>
        <taxon>Arnidovirineae</taxon>
        <taxon>Arteriviridae</taxon>
        <taxon>Equarterivirinae</taxon>
        <taxon>Alphaarterivirus</taxon>
        <taxon>Alphaarterivirus equid</taxon>
    </lineage>
</organism>
<dbReference type="EMBL" id="X53459">
    <property type="protein sequence ID" value="CAA37541.1"/>
    <property type="molecule type" value="Genomic_RNA"/>
</dbReference>
<dbReference type="PIR" id="C39925">
    <property type="entry name" value="C39925"/>
</dbReference>
<dbReference type="RefSeq" id="NP_065656.1">
    <property type="nucleotide sequence ID" value="NC_002532.2"/>
</dbReference>
<dbReference type="SMR" id="P28992"/>
<dbReference type="GlyCosmos" id="P28992">
    <property type="glycosylation" value="1 site, No reported glycans"/>
</dbReference>
<dbReference type="GeneID" id="921344"/>
<dbReference type="KEGG" id="vg:921344"/>
<dbReference type="Proteomes" id="UP000000353">
    <property type="component" value="Segment"/>
</dbReference>
<dbReference type="GO" id="GO:0005576">
    <property type="term" value="C:extracellular region"/>
    <property type="evidence" value="ECO:0007669"/>
    <property type="project" value="UniProtKB-SubCell"/>
</dbReference>
<dbReference type="GO" id="GO:0044167">
    <property type="term" value="C:host cell endoplasmic reticulum membrane"/>
    <property type="evidence" value="ECO:0007669"/>
    <property type="project" value="UniProtKB-SubCell"/>
</dbReference>
<dbReference type="GO" id="GO:0044178">
    <property type="term" value="C:host cell Golgi membrane"/>
    <property type="evidence" value="ECO:0007669"/>
    <property type="project" value="UniProtKB-SubCell"/>
</dbReference>
<dbReference type="GO" id="GO:0016020">
    <property type="term" value="C:membrane"/>
    <property type="evidence" value="ECO:0007669"/>
    <property type="project" value="UniProtKB-KW"/>
</dbReference>
<dbReference type="GO" id="GO:0019031">
    <property type="term" value="C:viral envelope"/>
    <property type="evidence" value="ECO:0007669"/>
    <property type="project" value="UniProtKB-KW"/>
</dbReference>
<dbReference type="GO" id="GO:0055036">
    <property type="term" value="C:virion membrane"/>
    <property type="evidence" value="ECO:0007669"/>
    <property type="project" value="UniProtKB-SubCell"/>
</dbReference>
<dbReference type="GO" id="GO:0075512">
    <property type="term" value="P:clathrin-dependent endocytosis of virus by host cell"/>
    <property type="evidence" value="ECO:0007669"/>
    <property type="project" value="UniProtKB-KW"/>
</dbReference>
<dbReference type="GO" id="GO:0019062">
    <property type="term" value="P:virion attachment to host cell"/>
    <property type="evidence" value="ECO:0007669"/>
    <property type="project" value="UniProtKB-KW"/>
</dbReference>
<dbReference type="InterPro" id="IPR001913">
    <property type="entry name" value="Equi_arteri_GP2b"/>
</dbReference>
<dbReference type="Pfam" id="PF01309">
    <property type="entry name" value="EAV_GS"/>
    <property type="match status" value="1"/>
</dbReference>
<feature type="signal peptide" evidence="2">
    <location>
        <begin position="1"/>
        <end position="28"/>
    </location>
</feature>
<feature type="chain" id="PRO_0000080876" description="Glycoprotein 2b">
    <location>
        <begin position="29"/>
        <end position="227"/>
    </location>
</feature>
<feature type="topological domain" description="Virion surface" evidence="2">
    <location>
        <begin position="29"/>
        <end position="177"/>
    </location>
</feature>
<feature type="transmembrane region" description="Helical" evidence="2">
    <location>
        <begin position="178"/>
        <end position="198"/>
    </location>
</feature>
<feature type="topological domain" description="Intravirion" evidence="2">
    <location>
        <begin position="199"/>
        <end position="227"/>
    </location>
</feature>
<feature type="glycosylation site" description="N-linked (GlcNAc...) asparagine; by host" evidence="2">
    <location>
        <position position="155"/>
    </location>
</feature>
<feature type="disulfide bond" evidence="6">
    <location>
        <begin position="48"/>
        <end position="137"/>
    </location>
</feature>
<feature type="disulfide bond" description="Interchain (with GP4)" evidence="6">
    <location>
        <position position="102"/>
    </location>
</feature>
<protein>
    <recommendedName>
        <fullName>Glycoprotein 2b</fullName>
        <shortName>Protein GP2b</shortName>
    </recommendedName>
    <alternativeName>
        <fullName>GP(S)</fullName>
    </alternativeName>
</protein>
<comment type="function">
    <text evidence="3">Minor envelope protein. Part of the glycoproteins heterotrimer GP2b-GP3-GP4 which is probably responsible for the attachment to target host cell. This attachment induces virion internalization predominantly through clathrin-dependent endocytosis.</text>
</comment>
<comment type="subunit">
    <text evidence="1 4">Heterotrimer of GP2b, GP3, and GP4; disulfide-linked (Probable). The GP2b-GP3-GP4 complex associates with the E protein (By similarity).</text>
</comment>
<comment type="subcellular location">
    <subcellularLocation>
        <location evidence="5">Virion membrane</location>
        <topology evidence="5">Single-pass type I membrane protein</topology>
    </subcellularLocation>
    <subcellularLocation>
        <location evidence="5">Host endoplasmic reticulum membrane</location>
        <topology evidence="5">Single-pass type I membrane protein</topology>
    </subcellularLocation>
    <subcellularLocation>
        <location evidence="5">Host Golgi apparatus membrane</location>
        <topology evidence="5">Single-pass type I membrane protein</topology>
    </subcellularLocation>
    <subcellularLocation>
        <location evidence="1">Secreted</location>
    </subcellularLocation>
</comment>
<comment type="miscellaneous">
    <text>Translated from a subgenomic RNA (sgRNA2).</text>
</comment>
<comment type="similarity">
    <text evidence="4">Belongs to the arteriviridae GP2b protein family.</text>
</comment>
<evidence type="ECO:0000250" key="1"/>
<evidence type="ECO:0000255" key="2"/>
<evidence type="ECO:0000269" key="3">
    <source>
    </source>
</evidence>
<evidence type="ECO:0000305" key="4"/>
<evidence type="ECO:0000305" key="5">
    <source>
    </source>
</evidence>
<evidence type="ECO:0000305" key="6">
    <source>
    </source>
</evidence>
<proteinExistence type="evidence at protein level"/>
<organismHost>
    <name type="scientific">Equidae</name>
    <name type="common">horses</name>
    <dbReference type="NCBI Taxonomy" id="9788"/>
</organismHost>
<accession>P28992</accession>
<name>GP2B_EAVBU</name>
<sequence>MQRFSFSCYLHWLLLLCFFSGSLLPSAAAWWRGVHEVRVTDLFKDLQCDNLRAKDAFPSLGYALSIGQSRLSYMLQDWLLAAHRKEVMPSNIMPMPGLTPDCFDHLESSSYAPFINAYRQAILSQYPQELQLEAINCKLLAVVAPALYHNYHLANLTGPATWVVPTVGQLHYYASSSIFASSVEVLAAIILLFACIPLVTRVYISFTRLMSPSRRTSSGTLPRRKIL</sequence>